<feature type="chain" id="PRO_1000115865" description="Enolase">
    <location>
        <begin position="1"/>
        <end position="428"/>
    </location>
</feature>
<feature type="active site" description="Proton donor" evidence="1">
    <location>
        <position position="205"/>
    </location>
</feature>
<feature type="active site" description="Proton acceptor" evidence="1">
    <location>
        <position position="337"/>
    </location>
</feature>
<feature type="binding site" evidence="1">
    <location>
        <position position="163"/>
    </location>
    <ligand>
        <name>(2R)-2-phosphoglycerate</name>
        <dbReference type="ChEBI" id="CHEBI:58289"/>
    </ligand>
</feature>
<feature type="binding site" evidence="1">
    <location>
        <position position="242"/>
    </location>
    <ligand>
        <name>Mg(2+)</name>
        <dbReference type="ChEBI" id="CHEBI:18420"/>
    </ligand>
</feature>
<feature type="binding site" evidence="1">
    <location>
        <position position="285"/>
    </location>
    <ligand>
        <name>Mg(2+)</name>
        <dbReference type="ChEBI" id="CHEBI:18420"/>
    </ligand>
</feature>
<feature type="binding site" evidence="1">
    <location>
        <position position="312"/>
    </location>
    <ligand>
        <name>Mg(2+)</name>
        <dbReference type="ChEBI" id="CHEBI:18420"/>
    </ligand>
</feature>
<feature type="binding site" evidence="1">
    <location>
        <position position="337"/>
    </location>
    <ligand>
        <name>(2R)-2-phosphoglycerate</name>
        <dbReference type="ChEBI" id="CHEBI:58289"/>
    </ligand>
</feature>
<feature type="binding site" evidence="1">
    <location>
        <position position="366"/>
    </location>
    <ligand>
        <name>(2R)-2-phosphoglycerate</name>
        <dbReference type="ChEBI" id="CHEBI:58289"/>
    </ligand>
</feature>
<feature type="binding site" evidence="1">
    <location>
        <position position="367"/>
    </location>
    <ligand>
        <name>(2R)-2-phosphoglycerate</name>
        <dbReference type="ChEBI" id="CHEBI:58289"/>
    </ligand>
</feature>
<feature type="binding site" evidence="1">
    <location>
        <position position="388"/>
    </location>
    <ligand>
        <name>(2R)-2-phosphoglycerate</name>
        <dbReference type="ChEBI" id="CHEBI:58289"/>
    </ligand>
</feature>
<sequence length="428" mass="46663">MSSIIDVYAREVLDSRGNPTVEVEVYTEAGAMGSAIVPSGASTGVHEAVELRDNDEKRFLGKGVETAVDNVNLEIADELVGWDVFDQVGIDNYLIELDGTENKSRLGANAILGVSLAVAKAAADENGQRLFEYIGGVNGKTLPVPMMNILNGGQHADNNVDIQEFMIMPVGGENFKESLRIGTEVFHNLKNVLKSRKLNTAVGDEGGFAPNLESNEEALQTIVEAIKKAGYEPGKDVMIAIDAAASEFYEDGKYNMAGDNAVRTSDEMIEYYKNLVEKYPIISIEDGLAEDDWDGWKKLTQELGSKIQLVGDDLFVTNVKRLQKGIEMGVCNSILIKLNQIGTLTETLDAIELAKRHGYTAVISHRSGETEDTTIADVAVATNAGQIKTGSTSRTDRICKYNQLLRIEDMLESTAVYDGIKTFYNLSK</sequence>
<accession>B0S1G7</accession>
<proteinExistence type="inferred from homology"/>
<organism>
    <name type="scientific">Finegoldia magna (strain ATCC 29328 / DSM 20472 / WAL 2508)</name>
    <name type="common">Peptostreptococcus magnus</name>
    <dbReference type="NCBI Taxonomy" id="334413"/>
    <lineage>
        <taxon>Bacteria</taxon>
        <taxon>Bacillati</taxon>
        <taxon>Bacillota</taxon>
        <taxon>Tissierellia</taxon>
        <taxon>Tissierellales</taxon>
        <taxon>Peptoniphilaceae</taxon>
        <taxon>Finegoldia</taxon>
    </lineage>
</organism>
<gene>
    <name evidence="1" type="primary">eno</name>
    <name type="ordered locus">FMG_0789</name>
</gene>
<protein>
    <recommendedName>
        <fullName evidence="1">Enolase</fullName>
        <ecNumber evidence="1">4.2.1.11</ecNumber>
    </recommendedName>
    <alternativeName>
        <fullName evidence="1">2-phospho-D-glycerate hydro-lyase</fullName>
    </alternativeName>
    <alternativeName>
        <fullName evidence="1">2-phosphoglycerate dehydratase</fullName>
    </alternativeName>
</protein>
<comment type="function">
    <text evidence="1">Catalyzes the reversible conversion of 2-phosphoglycerate (2-PG) into phosphoenolpyruvate (PEP). It is essential for the degradation of carbohydrates via glycolysis.</text>
</comment>
<comment type="catalytic activity">
    <reaction evidence="1">
        <text>(2R)-2-phosphoglycerate = phosphoenolpyruvate + H2O</text>
        <dbReference type="Rhea" id="RHEA:10164"/>
        <dbReference type="ChEBI" id="CHEBI:15377"/>
        <dbReference type="ChEBI" id="CHEBI:58289"/>
        <dbReference type="ChEBI" id="CHEBI:58702"/>
        <dbReference type="EC" id="4.2.1.11"/>
    </reaction>
</comment>
<comment type="cofactor">
    <cofactor evidence="1">
        <name>Mg(2+)</name>
        <dbReference type="ChEBI" id="CHEBI:18420"/>
    </cofactor>
    <text evidence="1">Binds a second Mg(2+) ion via substrate during catalysis.</text>
</comment>
<comment type="pathway">
    <text evidence="1">Carbohydrate degradation; glycolysis; pyruvate from D-glyceraldehyde 3-phosphate: step 4/5.</text>
</comment>
<comment type="subcellular location">
    <subcellularLocation>
        <location evidence="1">Cytoplasm</location>
    </subcellularLocation>
    <subcellularLocation>
        <location evidence="1">Secreted</location>
    </subcellularLocation>
    <subcellularLocation>
        <location evidence="1">Cell surface</location>
    </subcellularLocation>
    <text evidence="1">Fractions of enolase are present in both the cytoplasm and on the cell surface.</text>
</comment>
<comment type="similarity">
    <text evidence="1">Belongs to the enolase family.</text>
</comment>
<name>ENO_FINM2</name>
<keyword id="KW-0963">Cytoplasm</keyword>
<keyword id="KW-0324">Glycolysis</keyword>
<keyword id="KW-0456">Lyase</keyword>
<keyword id="KW-0460">Magnesium</keyword>
<keyword id="KW-0479">Metal-binding</keyword>
<keyword id="KW-1185">Reference proteome</keyword>
<keyword id="KW-0964">Secreted</keyword>
<dbReference type="EC" id="4.2.1.11" evidence="1"/>
<dbReference type="EMBL" id="AP008971">
    <property type="protein sequence ID" value="BAG08207.1"/>
    <property type="molecule type" value="Genomic_DNA"/>
</dbReference>
<dbReference type="RefSeq" id="WP_002839066.1">
    <property type="nucleotide sequence ID" value="NC_010376.1"/>
</dbReference>
<dbReference type="SMR" id="B0S1G7"/>
<dbReference type="STRING" id="334413.FMG_0789"/>
<dbReference type="KEGG" id="fma:FMG_0789"/>
<dbReference type="eggNOG" id="COG0148">
    <property type="taxonomic scope" value="Bacteria"/>
</dbReference>
<dbReference type="HOGENOM" id="CLU_031223_2_1_9"/>
<dbReference type="UniPathway" id="UPA00109">
    <property type="reaction ID" value="UER00187"/>
</dbReference>
<dbReference type="Proteomes" id="UP000001319">
    <property type="component" value="Chromosome"/>
</dbReference>
<dbReference type="GO" id="GO:0009986">
    <property type="term" value="C:cell surface"/>
    <property type="evidence" value="ECO:0007669"/>
    <property type="project" value="UniProtKB-SubCell"/>
</dbReference>
<dbReference type="GO" id="GO:0005576">
    <property type="term" value="C:extracellular region"/>
    <property type="evidence" value="ECO:0007669"/>
    <property type="project" value="UniProtKB-SubCell"/>
</dbReference>
<dbReference type="GO" id="GO:0000015">
    <property type="term" value="C:phosphopyruvate hydratase complex"/>
    <property type="evidence" value="ECO:0007669"/>
    <property type="project" value="InterPro"/>
</dbReference>
<dbReference type="GO" id="GO:0000287">
    <property type="term" value="F:magnesium ion binding"/>
    <property type="evidence" value="ECO:0007669"/>
    <property type="project" value="UniProtKB-UniRule"/>
</dbReference>
<dbReference type="GO" id="GO:0004634">
    <property type="term" value="F:phosphopyruvate hydratase activity"/>
    <property type="evidence" value="ECO:0007669"/>
    <property type="project" value="UniProtKB-UniRule"/>
</dbReference>
<dbReference type="GO" id="GO:0006096">
    <property type="term" value="P:glycolytic process"/>
    <property type="evidence" value="ECO:0007669"/>
    <property type="project" value="UniProtKB-UniRule"/>
</dbReference>
<dbReference type="CDD" id="cd03313">
    <property type="entry name" value="enolase"/>
    <property type="match status" value="1"/>
</dbReference>
<dbReference type="FunFam" id="3.20.20.120:FF:000001">
    <property type="entry name" value="Enolase"/>
    <property type="match status" value="1"/>
</dbReference>
<dbReference type="FunFam" id="3.30.390.10:FF:000001">
    <property type="entry name" value="Enolase"/>
    <property type="match status" value="1"/>
</dbReference>
<dbReference type="Gene3D" id="3.20.20.120">
    <property type="entry name" value="Enolase-like C-terminal domain"/>
    <property type="match status" value="1"/>
</dbReference>
<dbReference type="Gene3D" id="3.30.390.10">
    <property type="entry name" value="Enolase-like, N-terminal domain"/>
    <property type="match status" value="1"/>
</dbReference>
<dbReference type="HAMAP" id="MF_00318">
    <property type="entry name" value="Enolase"/>
    <property type="match status" value="1"/>
</dbReference>
<dbReference type="InterPro" id="IPR000941">
    <property type="entry name" value="Enolase"/>
</dbReference>
<dbReference type="InterPro" id="IPR036849">
    <property type="entry name" value="Enolase-like_C_sf"/>
</dbReference>
<dbReference type="InterPro" id="IPR029017">
    <property type="entry name" value="Enolase-like_N"/>
</dbReference>
<dbReference type="InterPro" id="IPR020810">
    <property type="entry name" value="Enolase_C"/>
</dbReference>
<dbReference type="InterPro" id="IPR020809">
    <property type="entry name" value="Enolase_CS"/>
</dbReference>
<dbReference type="InterPro" id="IPR020811">
    <property type="entry name" value="Enolase_N"/>
</dbReference>
<dbReference type="NCBIfam" id="TIGR01060">
    <property type="entry name" value="eno"/>
    <property type="match status" value="1"/>
</dbReference>
<dbReference type="PANTHER" id="PTHR11902">
    <property type="entry name" value="ENOLASE"/>
    <property type="match status" value="1"/>
</dbReference>
<dbReference type="PANTHER" id="PTHR11902:SF1">
    <property type="entry name" value="ENOLASE"/>
    <property type="match status" value="1"/>
</dbReference>
<dbReference type="Pfam" id="PF00113">
    <property type="entry name" value="Enolase_C"/>
    <property type="match status" value="1"/>
</dbReference>
<dbReference type="Pfam" id="PF03952">
    <property type="entry name" value="Enolase_N"/>
    <property type="match status" value="1"/>
</dbReference>
<dbReference type="PIRSF" id="PIRSF001400">
    <property type="entry name" value="Enolase"/>
    <property type="match status" value="1"/>
</dbReference>
<dbReference type="PRINTS" id="PR00148">
    <property type="entry name" value="ENOLASE"/>
</dbReference>
<dbReference type="SFLD" id="SFLDS00001">
    <property type="entry name" value="Enolase"/>
    <property type="match status" value="1"/>
</dbReference>
<dbReference type="SFLD" id="SFLDF00002">
    <property type="entry name" value="enolase"/>
    <property type="match status" value="1"/>
</dbReference>
<dbReference type="SMART" id="SM01192">
    <property type="entry name" value="Enolase_C"/>
    <property type="match status" value="1"/>
</dbReference>
<dbReference type="SMART" id="SM01193">
    <property type="entry name" value="Enolase_N"/>
    <property type="match status" value="1"/>
</dbReference>
<dbReference type="SUPFAM" id="SSF51604">
    <property type="entry name" value="Enolase C-terminal domain-like"/>
    <property type="match status" value="1"/>
</dbReference>
<dbReference type="SUPFAM" id="SSF54826">
    <property type="entry name" value="Enolase N-terminal domain-like"/>
    <property type="match status" value="1"/>
</dbReference>
<dbReference type="PROSITE" id="PS00164">
    <property type="entry name" value="ENOLASE"/>
    <property type="match status" value="1"/>
</dbReference>
<reference key="1">
    <citation type="journal article" date="2008" name="DNA Res.">
        <title>Complete genome sequence of Finegoldia magna, an anaerobic opportunistic pathogen.</title>
        <authorList>
            <person name="Goto T."/>
            <person name="Yamashita A."/>
            <person name="Hirakawa H."/>
            <person name="Matsutani M."/>
            <person name="Todo K."/>
            <person name="Ohshima K."/>
            <person name="Toh H."/>
            <person name="Miyamoto K."/>
            <person name="Kuhara S."/>
            <person name="Hattori M."/>
            <person name="Shimizu T."/>
            <person name="Akimoto S."/>
        </authorList>
    </citation>
    <scope>NUCLEOTIDE SEQUENCE [LARGE SCALE GENOMIC DNA]</scope>
    <source>
        <strain>ATCC 29328 / DSM 20472 / WAL 2508</strain>
    </source>
</reference>
<evidence type="ECO:0000255" key="1">
    <source>
        <dbReference type="HAMAP-Rule" id="MF_00318"/>
    </source>
</evidence>